<comment type="function">
    <text evidence="1">F(1)F(0) ATP synthase produces ATP from ADP in the presence of a proton or sodium gradient. F-type ATPases consist of two structural domains, F(1) containing the extramembraneous catalytic core and F(0) containing the membrane proton channel, linked together by a central stalk and a peripheral stalk. During catalysis, ATP synthesis in the catalytic domain of F(1) is coupled via a rotary mechanism of the central stalk subunits to proton translocation.</text>
</comment>
<comment type="function">
    <text evidence="1">This protein is part of the stalk that links CF(0) to CF(1). It either transmits conformational changes from CF(0) to CF(1) or is implicated in proton conduction.</text>
</comment>
<comment type="subunit">
    <text evidence="1">F-type ATPases have 2 components, F(1) - the catalytic core - and F(0) - the membrane proton channel. F(1) has five subunits: alpha(3), beta(3), gamma(1), delta(1), epsilon(1). F(0) has three main subunits: a(1), b(2) and c(10-14). The alpha and beta chains form an alternating ring which encloses part of the gamma chain. F(1) is attached to F(0) by a central stalk formed by the gamma and epsilon chains, while a peripheral stalk is formed by the delta and b chains.</text>
</comment>
<comment type="subcellular location">
    <subcellularLocation>
        <location evidence="1">Cell membrane</location>
        <topology evidence="1">Peripheral membrane protein</topology>
    </subcellularLocation>
</comment>
<comment type="similarity">
    <text evidence="1">Belongs to the ATPase delta chain family.</text>
</comment>
<dbReference type="EMBL" id="AE017283">
    <property type="protein sequence ID" value="AAT82991.1"/>
    <property type="molecule type" value="Genomic_DNA"/>
</dbReference>
<dbReference type="RefSeq" id="WP_002517837.1">
    <property type="nucleotide sequence ID" value="NZ_CP025935.1"/>
</dbReference>
<dbReference type="SMR" id="Q6A8C4"/>
<dbReference type="EnsemblBacteria" id="AAT82991">
    <property type="protein sequence ID" value="AAT82991"/>
    <property type="gene ID" value="PPA1242"/>
</dbReference>
<dbReference type="KEGG" id="pac:PPA1242"/>
<dbReference type="eggNOG" id="COG0712">
    <property type="taxonomic scope" value="Bacteria"/>
</dbReference>
<dbReference type="HOGENOM" id="CLU_088880_0_0_11"/>
<dbReference type="Proteomes" id="UP000000603">
    <property type="component" value="Chromosome"/>
</dbReference>
<dbReference type="GO" id="GO:0005886">
    <property type="term" value="C:plasma membrane"/>
    <property type="evidence" value="ECO:0007669"/>
    <property type="project" value="UniProtKB-SubCell"/>
</dbReference>
<dbReference type="GO" id="GO:0045259">
    <property type="term" value="C:proton-transporting ATP synthase complex"/>
    <property type="evidence" value="ECO:0007669"/>
    <property type="project" value="UniProtKB-KW"/>
</dbReference>
<dbReference type="GO" id="GO:0046933">
    <property type="term" value="F:proton-transporting ATP synthase activity, rotational mechanism"/>
    <property type="evidence" value="ECO:0007669"/>
    <property type="project" value="UniProtKB-UniRule"/>
</dbReference>
<dbReference type="HAMAP" id="MF_01416">
    <property type="entry name" value="ATP_synth_delta_bact"/>
    <property type="match status" value="1"/>
</dbReference>
<dbReference type="InterPro" id="IPR020781">
    <property type="entry name" value="ATPase_OSCP/d_CS"/>
</dbReference>
<dbReference type="InterPro" id="IPR000711">
    <property type="entry name" value="ATPase_OSCP/dsu"/>
</dbReference>
<dbReference type="NCBIfam" id="TIGR01145">
    <property type="entry name" value="ATP_synt_delta"/>
    <property type="match status" value="1"/>
</dbReference>
<dbReference type="NCBIfam" id="NF009967">
    <property type="entry name" value="PRK13430.1"/>
    <property type="match status" value="1"/>
</dbReference>
<dbReference type="PANTHER" id="PTHR11910">
    <property type="entry name" value="ATP SYNTHASE DELTA CHAIN"/>
    <property type="match status" value="1"/>
</dbReference>
<dbReference type="Pfam" id="PF00213">
    <property type="entry name" value="OSCP"/>
    <property type="match status" value="1"/>
</dbReference>
<dbReference type="PRINTS" id="PR00125">
    <property type="entry name" value="ATPASEDELTA"/>
</dbReference>
<dbReference type="PROSITE" id="PS00389">
    <property type="entry name" value="ATPASE_DELTA"/>
    <property type="match status" value="1"/>
</dbReference>
<gene>
    <name evidence="1" type="primary">atpH</name>
    <name type="ordered locus">PPA1242</name>
</gene>
<evidence type="ECO:0000255" key="1">
    <source>
        <dbReference type="HAMAP-Rule" id="MF_01416"/>
    </source>
</evidence>
<sequence>MTTAVGASQQLDEVGDRRGTGTEFANEIFAVVDVLNRESGLRRAVSDTGSETKARQGLIDAVFTSKVSPDCKELLDATTTCKWRSPAALTRALERQGVRAVLRGARQADRFEAVADELFHVSRLVRGQAALQVALGDPNRSVADRQELLMKLVGGQVSEETLVLARRAVVASDSTFEQVIDGYLHVAAEMADRRRAIVTTAKALTDAQRAEMVKQLERITGSPIELSEVVDPTVLGGALINLGDEVIDSTVAHRLDQARRELG</sequence>
<keyword id="KW-0066">ATP synthesis</keyword>
<keyword id="KW-1003">Cell membrane</keyword>
<keyword id="KW-0139">CF(1)</keyword>
<keyword id="KW-0375">Hydrogen ion transport</keyword>
<keyword id="KW-0406">Ion transport</keyword>
<keyword id="KW-0472">Membrane</keyword>
<keyword id="KW-0813">Transport</keyword>
<proteinExistence type="inferred from homology"/>
<reference key="1">
    <citation type="journal article" date="2004" name="Science">
        <title>The complete genome sequence of Propionibacterium acnes, a commensal of human skin.</title>
        <authorList>
            <person name="Brueggemann H."/>
            <person name="Henne A."/>
            <person name="Hoster F."/>
            <person name="Liesegang H."/>
            <person name="Wiezer A."/>
            <person name="Strittmatter A."/>
            <person name="Hujer S."/>
            <person name="Duerre P."/>
            <person name="Gottschalk G."/>
        </authorList>
    </citation>
    <scope>NUCLEOTIDE SEQUENCE [LARGE SCALE GENOMIC DNA]</scope>
    <source>
        <strain>DSM 16379 / KPA171202</strain>
    </source>
</reference>
<name>ATPD_CUTAK</name>
<accession>Q6A8C4</accession>
<feature type="chain" id="PRO_0000382141" description="ATP synthase subunit delta">
    <location>
        <begin position="1"/>
        <end position="263"/>
    </location>
</feature>
<protein>
    <recommendedName>
        <fullName evidence="1">ATP synthase subunit delta</fullName>
    </recommendedName>
    <alternativeName>
        <fullName evidence="1">ATP synthase F(1) sector subunit delta</fullName>
    </alternativeName>
    <alternativeName>
        <fullName evidence="1">F-type ATPase subunit delta</fullName>
        <shortName evidence="1">F-ATPase subunit delta</shortName>
    </alternativeName>
</protein>
<organism>
    <name type="scientific">Cutibacterium acnes (strain DSM 16379 / KPA171202)</name>
    <name type="common">Propionibacterium acnes</name>
    <dbReference type="NCBI Taxonomy" id="267747"/>
    <lineage>
        <taxon>Bacteria</taxon>
        <taxon>Bacillati</taxon>
        <taxon>Actinomycetota</taxon>
        <taxon>Actinomycetes</taxon>
        <taxon>Propionibacteriales</taxon>
        <taxon>Propionibacteriaceae</taxon>
        <taxon>Cutibacterium</taxon>
    </lineage>
</organism>